<dbReference type="EMBL" id="M29867">
    <property type="protein sequence ID" value="AAB64477.1"/>
    <property type="molecule type" value="mRNA"/>
</dbReference>
<dbReference type="EMBL" id="Z54144">
    <property type="protein sequence ID" value="CAA90859.1"/>
    <property type="molecule type" value="Genomic_DNA"/>
</dbReference>
<dbReference type="EMBL" id="EF675629">
    <property type="protein sequence ID" value="ABS11696.1"/>
    <property type="molecule type" value="mRNA"/>
</dbReference>
<dbReference type="EMBL" id="EU276066">
    <property type="protein sequence ID" value="ABX72064.1"/>
    <property type="molecule type" value="mRNA"/>
</dbReference>
<dbReference type="PIR" id="A24390">
    <property type="entry name" value="IVBOG"/>
</dbReference>
<dbReference type="RefSeq" id="NP_776511.1">
    <property type="nucleotide sequence ID" value="NM_174086.1"/>
</dbReference>
<dbReference type="PDB" id="1D9C">
    <property type="method" value="X-ray"/>
    <property type="resolution" value="2.00 A"/>
    <property type="chains" value="A/B=24-144"/>
</dbReference>
<dbReference type="PDB" id="1D9G">
    <property type="method" value="X-ray"/>
    <property type="resolution" value="2.90 A"/>
    <property type="chains" value="A/B=24-144"/>
</dbReference>
<dbReference type="PDB" id="1RFB">
    <property type="method" value="X-ray"/>
    <property type="resolution" value="3.00 A"/>
    <property type="chains" value="A/B=24-142"/>
</dbReference>
<dbReference type="PDBsum" id="1D9C"/>
<dbReference type="PDBsum" id="1D9G"/>
<dbReference type="PDBsum" id="1RFB"/>
<dbReference type="SMR" id="P07353"/>
<dbReference type="FunCoup" id="P07353">
    <property type="interactions" value="338"/>
</dbReference>
<dbReference type="STRING" id="9913.ENSBTAP00000016634"/>
<dbReference type="GlyCosmos" id="P07353">
    <property type="glycosylation" value="2 sites, No reported glycans"/>
</dbReference>
<dbReference type="GlyGen" id="P07353">
    <property type="glycosylation" value="2 sites"/>
</dbReference>
<dbReference type="PaxDb" id="9913-ENSBTAP00000016634"/>
<dbReference type="Ensembl" id="ENSBTAT00000016634.4">
    <property type="protein sequence ID" value="ENSBTAP00000016634.2"/>
    <property type="gene ID" value="ENSBTAG00000012529.4"/>
</dbReference>
<dbReference type="GeneID" id="281237"/>
<dbReference type="KEGG" id="bta:281237"/>
<dbReference type="CTD" id="3458"/>
<dbReference type="VEuPathDB" id="HostDB:ENSBTAG00000012529"/>
<dbReference type="VGNC" id="VGNC:30057">
    <property type="gene designation" value="IFNG"/>
</dbReference>
<dbReference type="eggNOG" id="ENOG502SBGW">
    <property type="taxonomic scope" value="Eukaryota"/>
</dbReference>
<dbReference type="GeneTree" id="ENSGT00390000007831"/>
<dbReference type="HOGENOM" id="CLU_135106_0_0_1"/>
<dbReference type="InParanoid" id="P07353"/>
<dbReference type="OMA" id="QIVSMYL"/>
<dbReference type="OrthoDB" id="9937106at2759"/>
<dbReference type="TreeFam" id="TF336308"/>
<dbReference type="Reactome" id="R-BTA-877300">
    <property type="pathway name" value="Interferon gamma signaling"/>
</dbReference>
<dbReference type="Reactome" id="R-BTA-877312">
    <property type="pathway name" value="Regulation of IFNG signaling"/>
</dbReference>
<dbReference type="Reactome" id="R-BTA-9732724">
    <property type="pathway name" value="IFNG signaling activates MAPKs"/>
</dbReference>
<dbReference type="EvolutionaryTrace" id="P07353"/>
<dbReference type="Proteomes" id="UP000009136">
    <property type="component" value="Chromosome 5"/>
</dbReference>
<dbReference type="Bgee" id="ENSBTAG00000012529">
    <property type="expression patterns" value="Expressed in mesenteric lymph node and 40 other cell types or tissues"/>
</dbReference>
<dbReference type="GO" id="GO:0005615">
    <property type="term" value="C:extracellular space"/>
    <property type="evidence" value="ECO:0000314"/>
    <property type="project" value="AgBase"/>
</dbReference>
<dbReference type="GO" id="GO:0005125">
    <property type="term" value="F:cytokine activity"/>
    <property type="evidence" value="ECO:0000318"/>
    <property type="project" value="GO_Central"/>
</dbReference>
<dbReference type="GO" id="GO:0005133">
    <property type="term" value="F:type II interferon receptor binding"/>
    <property type="evidence" value="ECO:0007669"/>
    <property type="project" value="InterPro"/>
</dbReference>
<dbReference type="GO" id="GO:0002250">
    <property type="term" value="P:adaptive immune response"/>
    <property type="evidence" value="ECO:0000318"/>
    <property type="project" value="GO_Central"/>
</dbReference>
<dbReference type="GO" id="GO:0048143">
    <property type="term" value="P:astrocyte activation"/>
    <property type="evidence" value="ECO:0007669"/>
    <property type="project" value="Ensembl"/>
</dbReference>
<dbReference type="GO" id="GO:0097696">
    <property type="term" value="P:cell surface receptor signaling pathway via STAT"/>
    <property type="evidence" value="ECO:0007669"/>
    <property type="project" value="Ensembl"/>
</dbReference>
<dbReference type="GO" id="GO:0051607">
    <property type="term" value="P:defense response to virus"/>
    <property type="evidence" value="ECO:0007669"/>
    <property type="project" value="UniProtKB-KW"/>
</dbReference>
<dbReference type="GO" id="GO:0097191">
    <property type="term" value="P:extrinsic apoptotic signaling pathway"/>
    <property type="evidence" value="ECO:0007669"/>
    <property type="project" value="Ensembl"/>
</dbReference>
<dbReference type="GO" id="GO:0038096">
    <property type="term" value="P:Fc-gamma receptor signaling pathway involved in phagocytosis"/>
    <property type="evidence" value="ECO:0007669"/>
    <property type="project" value="Ensembl"/>
</dbReference>
<dbReference type="GO" id="GO:0006959">
    <property type="term" value="P:humoral immune response"/>
    <property type="evidence" value="ECO:0000318"/>
    <property type="project" value="GO_Central"/>
</dbReference>
<dbReference type="GO" id="GO:0002281">
    <property type="term" value="P:macrophage activation involved in immune response"/>
    <property type="evidence" value="ECO:0007669"/>
    <property type="project" value="Ensembl"/>
</dbReference>
<dbReference type="GO" id="GO:0030225">
    <property type="term" value="P:macrophage differentiation"/>
    <property type="evidence" value="ECO:0007669"/>
    <property type="project" value="Ensembl"/>
</dbReference>
<dbReference type="GO" id="GO:0001774">
    <property type="term" value="P:microglial cell activation"/>
    <property type="evidence" value="ECO:0007669"/>
    <property type="project" value="Ensembl"/>
</dbReference>
<dbReference type="GO" id="GO:0045892">
    <property type="term" value="P:negative regulation of DNA-templated transcription"/>
    <property type="evidence" value="ECO:0007669"/>
    <property type="project" value="Ensembl"/>
</dbReference>
<dbReference type="GO" id="GO:0032700">
    <property type="term" value="P:negative regulation of interleukin-17 production"/>
    <property type="evidence" value="ECO:0007669"/>
    <property type="project" value="Ensembl"/>
</dbReference>
<dbReference type="GO" id="GO:0048662">
    <property type="term" value="P:negative regulation of smooth muscle cell proliferation"/>
    <property type="evidence" value="ECO:0007669"/>
    <property type="project" value="Ensembl"/>
</dbReference>
<dbReference type="GO" id="GO:1902004">
    <property type="term" value="P:positive regulation of amyloid-beta formation"/>
    <property type="evidence" value="ECO:0007669"/>
    <property type="project" value="Ensembl"/>
</dbReference>
<dbReference type="GO" id="GO:0010508">
    <property type="term" value="P:positive regulation of autophagy"/>
    <property type="evidence" value="ECO:0007669"/>
    <property type="project" value="Ensembl"/>
</dbReference>
<dbReference type="GO" id="GO:0030890">
    <property type="term" value="P:positive regulation of B cell proliferation"/>
    <property type="evidence" value="ECO:0000315"/>
    <property type="project" value="AgBase"/>
</dbReference>
<dbReference type="GO" id="GO:0032834">
    <property type="term" value="P:positive regulation of CD4-positive, CD25-positive, alpha-beta regulatory T cell differentiation involved in immune response"/>
    <property type="evidence" value="ECO:0007669"/>
    <property type="project" value="Ensembl"/>
</dbReference>
<dbReference type="GO" id="GO:0032722">
    <property type="term" value="P:positive regulation of chemokine production"/>
    <property type="evidence" value="ECO:0007669"/>
    <property type="project" value="Ensembl"/>
</dbReference>
<dbReference type="GO" id="GO:0010634">
    <property type="term" value="P:positive regulation of epithelial cell migration"/>
    <property type="evidence" value="ECO:0007669"/>
    <property type="project" value="Ensembl"/>
</dbReference>
<dbReference type="GO" id="GO:0060552">
    <property type="term" value="P:positive regulation of fructose 1,6-bisphosphate metabolic process"/>
    <property type="evidence" value="ECO:0007669"/>
    <property type="project" value="Ensembl"/>
</dbReference>
<dbReference type="GO" id="GO:0050729">
    <property type="term" value="P:positive regulation of inflammatory response"/>
    <property type="evidence" value="ECO:0007669"/>
    <property type="project" value="Ensembl"/>
</dbReference>
<dbReference type="GO" id="GO:0032735">
    <property type="term" value="P:positive regulation of interleukin-12 production"/>
    <property type="evidence" value="ECO:0007669"/>
    <property type="project" value="Ensembl"/>
</dbReference>
<dbReference type="GO" id="GO:0032747">
    <property type="term" value="P:positive regulation of interleukin-23 production"/>
    <property type="evidence" value="ECO:0007669"/>
    <property type="project" value="Ensembl"/>
</dbReference>
<dbReference type="GO" id="GO:0032755">
    <property type="term" value="P:positive regulation of interleukin-6 production"/>
    <property type="evidence" value="ECO:0007669"/>
    <property type="project" value="Ensembl"/>
</dbReference>
<dbReference type="GO" id="GO:0051044">
    <property type="term" value="P:positive regulation of membrane protein ectodomain proteolysis"/>
    <property type="evidence" value="ECO:0007669"/>
    <property type="project" value="Ensembl"/>
</dbReference>
<dbReference type="GO" id="GO:0050769">
    <property type="term" value="P:positive regulation of neurogenesis"/>
    <property type="evidence" value="ECO:0007669"/>
    <property type="project" value="Ensembl"/>
</dbReference>
<dbReference type="GO" id="GO:0045429">
    <property type="term" value="P:positive regulation of nitric oxide biosynthetic process"/>
    <property type="evidence" value="ECO:0007669"/>
    <property type="project" value="Ensembl"/>
</dbReference>
<dbReference type="GO" id="GO:0045672">
    <property type="term" value="P:positive regulation of osteoclast differentiation"/>
    <property type="evidence" value="ECO:0007669"/>
    <property type="project" value="Ensembl"/>
</dbReference>
<dbReference type="GO" id="GO:0042307">
    <property type="term" value="P:positive regulation of protein import into nucleus"/>
    <property type="evidence" value="ECO:0007669"/>
    <property type="project" value="Ensembl"/>
</dbReference>
<dbReference type="GO" id="GO:0031334">
    <property type="term" value="P:positive regulation of protein-containing complex assembly"/>
    <property type="evidence" value="ECO:0007669"/>
    <property type="project" value="Ensembl"/>
</dbReference>
<dbReference type="GO" id="GO:0034393">
    <property type="term" value="P:positive regulation of smooth muscle cell apoptotic process"/>
    <property type="evidence" value="ECO:0007669"/>
    <property type="project" value="Ensembl"/>
</dbReference>
<dbReference type="GO" id="GO:0045944">
    <property type="term" value="P:positive regulation of transcription by RNA polymerase II"/>
    <property type="evidence" value="ECO:0000315"/>
    <property type="project" value="AgBase"/>
</dbReference>
<dbReference type="GO" id="GO:2000309">
    <property type="term" value="P:positive regulation of tumor necrosis factor (ligand) superfamily member 11 production"/>
    <property type="evidence" value="ECO:0007669"/>
    <property type="project" value="Ensembl"/>
</dbReference>
<dbReference type="GO" id="GO:0060557">
    <property type="term" value="P:positive regulation of vitamin D biosynthetic process"/>
    <property type="evidence" value="ECO:0007669"/>
    <property type="project" value="Ensembl"/>
</dbReference>
<dbReference type="GO" id="GO:0050796">
    <property type="term" value="P:regulation of insulin secretion"/>
    <property type="evidence" value="ECO:0007669"/>
    <property type="project" value="Ensembl"/>
</dbReference>
<dbReference type="GO" id="GO:0060333">
    <property type="term" value="P:type II interferon-mediated signaling pathway"/>
    <property type="evidence" value="ECO:0007669"/>
    <property type="project" value="Ensembl"/>
</dbReference>
<dbReference type="GO" id="GO:0038196">
    <property type="term" value="P:type III interferon-mediated signaling pathway"/>
    <property type="evidence" value="ECO:0007669"/>
    <property type="project" value="Ensembl"/>
</dbReference>
<dbReference type="FunFam" id="1.20.1250.10:FF:000080">
    <property type="entry name" value="Interferon gamma"/>
    <property type="match status" value="1"/>
</dbReference>
<dbReference type="Gene3D" id="1.20.1250.10">
    <property type="match status" value="1"/>
</dbReference>
<dbReference type="InterPro" id="IPR009079">
    <property type="entry name" value="4_helix_cytokine-like_core"/>
</dbReference>
<dbReference type="InterPro" id="IPR002069">
    <property type="entry name" value="Interferon_gamma"/>
</dbReference>
<dbReference type="PANTHER" id="PTHR11419">
    <property type="entry name" value="INTERFERON GAMMA"/>
    <property type="match status" value="1"/>
</dbReference>
<dbReference type="PANTHER" id="PTHR11419:SF0">
    <property type="entry name" value="INTERFERON GAMMA"/>
    <property type="match status" value="1"/>
</dbReference>
<dbReference type="Pfam" id="PF00714">
    <property type="entry name" value="IFN-gamma"/>
    <property type="match status" value="1"/>
</dbReference>
<dbReference type="PIRSF" id="PIRSF001936">
    <property type="entry name" value="IFN-gamma"/>
    <property type="match status" value="1"/>
</dbReference>
<dbReference type="SUPFAM" id="SSF47266">
    <property type="entry name" value="4-helical cytokines"/>
    <property type="match status" value="1"/>
</dbReference>
<evidence type="ECO:0000250" key="1"/>
<evidence type="ECO:0000250" key="2">
    <source>
        <dbReference type="UniProtKB" id="P01579"/>
    </source>
</evidence>
<evidence type="ECO:0000250" key="3">
    <source>
        <dbReference type="UniProtKB" id="P01580"/>
    </source>
</evidence>
<evidence type="ECO:0000269" key="4">
    <source>
    </source>
</evidence>
<evidence type="ECO:0000269" key="5">
    <source ref="3"/>
</evidence>
<evidence type="ECO:0000305" key="6"/>
<evidence type="ECO:0007829" key="7">
    <source>
        <dbReference type="PDB" id="1D9C"/>
    </source>
</evidence>
<evidence type="ECO:0007829" key="8">
    <source>
        <dbReference type="PDB" id="1D9G"/>
    </source>
</evidence>
<feature type="signal peptide" evidence="1">
    <location>
        <begin position="1"/>
        <end position="23"/>
    </location>
</feature>
<feature type="chain" id="PRO_0000016433" description="Interferon gamma">
    <location>
        <begin position="24"/>
        <end position="166"/>
    </location>
</feature>
<feature type="modified residue" description="Pyrrolidone carboxylic acid" evidence="2">
    <location>
        <position position="24"/>
    </location>
</feature>
<feature type="glycosylation site" description="N-linked (GlcNAc...) asparagine" evidence="1">
    <location>
        <position position="39"/>
    </location>
</feature>
<feature type="glycosylation site" description="N-linked (GlcNAc...) asparagine" evidence="1">
    <location>
        <position position="106"/>
    </location>
</feature>
<feature type="sequence variant" evidence="4">
    <original>G</original>
    <variation>V</variation>
    <location>
        <position position="14"/>
    </location>
</feature>
<feature type="sequence variant" description="May represent an allelic difference or a cloning artifact." evidence="5">
    <original>M</original>
    <variation>T</variation>
    <location>
        <position position="166"/>
    </location>
</feature>
<feature type="helix" evidence="7">
    <location>
        <begin position="25"/>
        <end position="38"/>
    </location>
</feature>
<feature type="turn" evidence="8">
    <location>
        <begin position="39"/>
        <end position="41"/>
    </location>
</feature>
<feature type="helix" evidence="8">
    <location>
        <begin position="43"/>
        <end position="46"/>
    </location>
</feature>
<feature type="helix" evidence="7">
    <location>
        <begin position="53"/>
        <end position="58"/>
    </location>
</feature>
<feature type="turn" evidence="7">
    <location>
        <begin position="59"/>
        <end position="61"/>
    </location>
</feature>
<feature type="turn" evidence="7">
    <location>
        <begin position="63"/>
        <end position="65"/>
    </location>
</feature>
<feature type="helix" evidence="7">
    <location>
        <begin position="66"/>
        <end position="81"/>
    </location>
</feature>
<feature type="turn" evidence="7">
    <location>
        <begin position="82"/>
        <end position="85"/>
    </location>
</feature>
<feature type="turn" evidence="7">
    <location>
        <begin position="87"/>
        <end position="89"/>
    </location>
</feature>
<feature type="helix" evidence="7">
    <location>
        <begin position="90"/>
        <end position="104"/>
    </location>
</feature>
<feature type="helix" evidence="7">
    <location>
        <begin position="109"/>
        <end position="119"/>
    </location>
</feature>
<feature type="helix" evidence="7">
    <location>
        <begin position="126"/>
        <end position="134"/>
    </location>
</feature>
<feature type="helix" evidence="7">
    <location>
        <begin position="136"/>
        <end position="143"/>
    </location>
</feature>
<comment type="function">
    <text evidence="2 3">Type II interferon produced by immune cells such as T-cells and NK cells that plays crucial roles in antimicrobial, antiviral, and antitumor responses by activating effector immune cells and enhancing antigen presentation. Primarily signals through the JAK-STAT pathway after interaction with its receptor IFNGR1 to affect gene regulation. Upon IFNG binding, IFNGR1 intracellular domain opens out to allow association of downstream signaling components JAK2, JAK1 and STAT1, leading to STAT1 activation, nuclear translocation and transcription of IFNG-regulated genes. Many of the induced genes are transcription factors such as IRF1 that are able to further drive regulation of a next wave of transcription. Plays a role in class I antigen presentation pathway by inducing a replacement of catalytic proteasome subunits with immunoproteasome subunits. In turn, increases the quantity, quality, and repertoire of peptides for class I MHC loading. Increases the efficiency of peptide generation also by inducing the expression of activator PA28 that associates with the proteasome and alters its proteolytic cleavage preference. Up-regulates as well MHC II complexes on the cell surface by promoting expression of several key molecules such as cathepsins B/CTSB, H/CTSH, and L/CTSL (By similarity). Participates in the regulation of hematopoietic stem cells during development and under homeostatic conditions by affecting their development, quiescence, and differentiation (By similarity).</text>
</comment>
<comment type="subunit">
    <text evidence="2">Homodimer. Interacts with IFNGR1 (via extracellular domain); this interaction promotes IFNGR1 dimerization.</text>
</comment>
<comment type="subcellular location">
    <subcellularLocation>
        <location evidence="2">Secreted</location>
    </subcellularLocation>
</comment>
<comment type="tissue specificity">
    <text>Released primarily from activated T lymphocytes.</text>
</comment>
<comment type="similarity">
    <text evidence="6">Belongs to the type II (or gamma) interferon family.</text>
</comment>
<proteinExistence type="evidence at protein level"/>
<sequence length="166" mass="19393">MKYTSYFLALLLCGLLGFSGSYGQGQFFREIENLKEYFNASSPDVAKGGPLFSEILKNWKDESDKKIIQSQIVSFYFKLFENLKDNQVIQRSMDIIKQDMFQKFLNGSSEKLEDFKKLIQIPVDDLQIQRKAINELIKVMNDLSPKSNLRKRKRSQNLFRGRRASM</sequence>
<gene>
    <name type="primary">IFNG</name>
</gene>
<name>IFNG_BOVIN</name>
<reference key="1">
    <citation type="journal article" date="1986" name="J. Immunol.">
        <title>Cloning, sequence, and expression of bovine interferon-gamma.</title>
        <authorList>
            <person name="Cerretti D.P."/>
            <person name="McKereghan K."/>
            <person name="Larsen A."/>
            <person name="Cosman D."/>
            <person name="Gillis S."/>
            <person name="Baker P.E."/>
        </authorList>
    </citation>
    <scope>NUCLEOTIDE SEQUENCE [MRNA]</scope>
</reference>
<reference key="2">
    <citation type="journal article" date="2002" name="J. Interferon Cytokine Res.">
        <title>A comprehensive survey for polymorphisms in the bovine IFN-gamma gene reveals a highly polymorphic intronic DNA sequence allowing improved genotyping of Bovinae.</title>
        <authorList>
            <person name="Schmidt P."/>
            <person name="Kuehn C."/>
            <person name="Maillard J.-C."/>
            <person name="Pitra C."/>
            <person name="Tiemann U."/>
            <person name="Weikard R."/>
            <person name="Schwerin M."/>
        </authorList>
    </citation>
    <scope>NUCLEOTIDE SEQUENCE [GENOMIC DNA]</scope>
    <scope>VARIANT VAL-14</scope>
    <source>
        <strain>Deutsche Schwarzbunte</strain>
    </source>
</reference>
<reference key="3">
    <citation type="submission" date="2007-06" db="EMBL/GenBank/DDBJ databases">
        <title>Cloning and sequence analysis of cattle interferon gamma.</title>
        <authorList>
            <person name="Li G."/>
            <person name="Hu Y."/>
            <person name="Ren X."/>
            <person name="Ma D."/>
            <person name="Gai R."/>
        </authorList>
    </citation>
    <scope>NUCLEOTIDE SEQUENCE [MRNA]</scope>
    <scope>VARIANT THR-166</scope>
</reference>
<reference key="4">
    <citation type="submission" date="2007-11" db="EMBL/GenBank/DDBJ databases">
        <title>U.S. veterinary immune reagent network: expressed bovine gene sequences.</title>
        <authorList>
            <consortium name="U.S. Veterinary Immune Reagent Network"/>
            <person name="Hudgens T."/>
            <person name="Tompkins D."/>
            <person name="Baldwin C.L."/>
        </authorList>
    </citation>
    <scope>NUCLEOTIDE SEQUENCE [LARGE SCALE MRNA]</scope>
    <source>
        <strain>Belted Galloway</strain>
        <tissue>Peripheral blood</tissue>
    </source>
</reference>
<reference key="5">
    <citation type="journal article" date="1993" name="Acta Crystallogr. D">
        <title>Structure of recombinant bovine interferon-gamma at 3.0-A resolution.</title>
        <authorList>
            <person name="Samudzi C.T."/>
            <person name="Rubin J.R."/>
        </authorList>
    </citation>
    <scope>X-RAY CRYSTALLOGRAPHY (3.0 ANGSTROMS)</scope>
</reference>
<reference key="6">
    <citation type="journal article" date="2000" name="Acta Crystallogr. D">
        <title>The 2.0-A structure of bovine interferon-gamma; assessment of the structural differences between species.</title>
        <authorList>
            <person name="Randal M."/>
            <person name="Kossiakoff A.A."/>
        </authorList>
    </citation>
    <scope>X-RAY CRYSTALLOGRAPHY (2.0 ANGSTROMS)</scope>
</reference>
<keyword id="KW-0002">3D-structure</keyword>
<keyword id="KW-0051">Antiviral defense</keyword>
<keyword id="KW-0202">Cytokine</keyword>
<keyword id="KW-0325">Glycoprotein</keyword>
<keyword id="KW-0341">Growth regulation</keyword>
<keyword id="KW-0873">Pyrrolidone carboxylic acid</keyword>
<keyword id="KW-1185">Reference proteome</keyword>
<keyword id="KW-0964">Secreted</keyword>
<keyword id="KW-0732">Signal</keyword>
<accession>P07353</accession>
<accession>A7L687</accession>
<accession>A9QWQ4</accession>
<protein>
    <recommendedName>
        <fullName>Interferon gamma</fullName>
        <shortName>BoIFNG</shortName>
        <shortName>IFN-gamma</shortName>
    </recommendedName>
</protein>
<organism>
    <name type="scientific">Bos taurus</name>
    <name type="common">Bovine</name>
    <dbReference type="NCBI Taxonomy" id="9913"/>
    <lineage>
        <taxon>Eukaryota</taxon>
        <taxon>Metazoa</taxon>
        <taxon>Chordata</taxon>
        <taxon>Craniata</taxon>
        <taxon>Vertebrata</taxon>
        <taxon>Euteleostomi</taxon>
        <taxon>Mammalia</taxon>
        <taxon>Eutheria</taxon>
        <taxon>Laurasiatheria</taxon>
        <taxon>Artiodactyla</taxon>
        <taxon>Ruminantia</taxon>
        <taxon>Pecora</taxon>
        <taxon>Bovidae</taxon>
        <taxon>Bovinae</taxon>
        <taxon>Bos</taxon>
    </lineage>
</organism>